<sequence>MSWFESFVLGLVQGLTEFLPISSSAHLRLTAAFAGWHDPGAAFTAISQIGTEAAVLIYFRKDIARILSAWFRSLTDRSMRGDHDAQMGWLVIVGSIPIGVLGITLKDQIEGPFRDLRLIATTLIVMGIVLGVADRLAARDETGGKHRVVKERKTLKDLGVKDGLIYGFCQAMALIPGVSRSGATISGGLLMGYTRESAARYSFLLAIPAVLASGAYELKDVGEGHVSWGPTIFATLVAFFVGYAVIAWFMKFITTKSFMPFVIYRILLGVVLFILIWAGVLSPHAGESAG</sequence>
<comment type="function">
    <text evidence="1">Catalyzes the dephosphorylation of undecaprenyl diphosphate (UPP). Confers resistance to bacitracin.</text>
</comment>
<comment type="catalytic activity">
    <reaction evidence="1">
        <text>di-trans,octa-cis-undecaprenyl diphosphate + H2O = di-trans,octa-cis-undecaprenyl phosphate + phosphate + H(+)</text>
        <dbReference type="Rhea" id="RHEA:28094"/>
        <dbReference type="ChEBI" id="CHEBI:15377"/>
        <dbReference type="ChEBI" id="CHEBI:15378"/>
        <dbReference type="ChEBI" id="CHEBI:43474"/>
        <dbReference type="ChEBI" id="CHEBI:58405"/>
        <dbReference type="ChEBI" id="CHEBI:60392"/>
        <dbReference type="EC" id="3.6.1.27"/>
    </reaction>
</comment>
<comment type="subcellular location">
    <subcellularLocation>
        <location evidence="1">Cell membrane</location>
        <topology evidence="1">Multi-pass membrane protein</topology>
    </subcellularLocation>
</comment>
<comment type="miscellaneous">
    <text>Bacitracin is thought to be involved in the inhibition of peptidoglycan synthesis by sequestering undecaprenyl diphosphate, thereby reducing the pool of lipid carrier available.</text>
</comment>
<comment type="similarity">
    <text evidence="1">Belongs to the UppP family.</text>
</comment>
<keyword id="KW-0046">Antibiotic resistance</keyword>
<keyword id="KW-1003">Cell membrane</keyword>
<keyword id="KW-0133">Cell shape</keyword>
<keyword id="KW-0961">Cell wall biogenesis/degradation</keyword>
<keyword id="KW-0378">Hydrolase</keyword>
<keyword id="KW-0472">Membrane</keyword>
<keyword id="KW-0573">Peptidoglycan synthesis</keyword>
<keyword id="KW-0812">Transmembrane</keyword>
<keyword id="KW-1133">Transmembrane helix</keyword>
<feature type="chain" id="PRO_1000197414" description="Undecaprenyl-diphosphatase">
    <location>
        <begin position="1"/>
        <end position="290"/>
    </location>
</feature>
<feature type="transmembrane region" description="Helical" evidence="1">
    <location>
        <begin position="39"/>
        <end position="59"/>
    </location>
</feature>
<feature type="transmembrane region" description="Helical" evidence="1">
    <location>
        <begin position="85"/>
        <end position="105"/>
    </location>
</feature>
<feature type="transmembrane region" description="Helical" evidence="1">
    <location>
        <begin position="118"/>
        <end position="138"/>
    </location>
</feature>
<feature type="transmembrane region" description="Helical" evidence="1">
    <location>
        <begin position="202"/>
        <end position="222"/>
    </location>
</feature>
<feature type="transmembrane region" description="Helical" evidence="1">
    <location>
        <begin position="230"/>
        <end position="250"/>
    </location>
</feature>
<feature type="transmembrane region" description="Helical" evidence="1">
    <location>
        <begin position="261"/>
        <end position="281"/>
    </location>
</feature>
<evidence type="ECO:0000255" key="1">
    <source>
        <dbReference type="HAMAP-Rule" id="MF_01006"/>
    </source>
</evidence>
<reference key="1">
    <citation type="journal article" date="2008" name="J. Bacteriol.">
        <title>Genome sequence of the streptomycin-producing microorganism Streptomyces griseus IFO 13350.</title>
        <authorList>
            <person name="Ohnishi Y."/>
            <person name="Ishikawa J."/>
            <person name="Hara H."/>
            <person name="Suzuki H."/>
            <person name="Ikenoya M."/>
            <person name="Ikeda H."/>
            <person name="Yamashita A."/>
            <person name="Hattori M."/>
            <person name="Horinouchi S."/>
        </authorList>
    </citation>
    <scope>NUCLEOTIDE SEQUENCE [LARGE SCALE GENOMIC DNA]</scope>
    <source>
        <strain>JCM 4626 / CBS 651.72 / NBRC 13350 / KCC S-0626 / ISP 5235</strain>
    </source>
</reference>
<proteinExistence type="inferred from homology"/>
<accession>B1W4P7</accession>
<dbReference type="EC" id="3.6.1.27" evidence="1"/>
<dbReference type="EMBL" id="AP009493">
    <property type="protein sequence ID" value="BAG23064.1"/>
    <property type="molecule type" value="Genomic_DNA"/>
</dbReference>
<dbReference type="RefSeq" id="WP_003970552.1">
    <property type="nucleotide sequence ID" value="NC_010572.1"/>
</dbReference>
<dbReference type="SMR" id="B1W4P7"/>
<dbReference type="KEGG" id="sgr:SGR_6235"/>
<dbReference type="eggNOG" id="COG1968">
    <property type="taxonomic scope" value="Bacteria"/>
</dbReference>
<dbReference type="HOGENOM" id="CLU_060296_1_0_11"/>
<dbReference type="Proteomes" id="UP000001685">
    <property type="component" value="Chromosome"/>
</dbReference>
<dbReference type="GO" id="GO:0005886">
    <property type="term" value="C:plasma membrane"/>
    <property type="evidence" value="ECO:0007669"/>
    <property type="project" value="UniProtKB-SubCell"/>
</dbReference>
<dbReference type="GO" id="GO:0050380">
    <property type="term" value="F:undecaprenyl-diphosphatase activity"/>
    <property type="evidence" value="ECO:0007669"/>
    <property type="project" value="UniProtKB-UniRule"/>
</dbReference>
<dbReference type="GO" id="GO:0071555">
    <property type="term" value="P:cell wall organization"/>
    <property type="evidence" value="ECO:0007669"/>
    <property type="project" value="UniProtKB-KW"/>
</dbReference>
<dbReference type="GO" id="GO:0009252">
    <property type="term" value="P:peptidoglycan biosynthetic process"/>
    <property type="evidence" value="ECO:0007669"/>
    <property type="project" value="UniProtKB-KW"/>
</dbReference>
<dbReference type="GO" id="GO:0008360">
    <property type="term" value="P:regulation of cell shape"/>
    <property type="evidence" value="ECO:0007669"/>
    <property type="project" value="UniProtKB-KW"/>
</dbReference>
<dbReference type="GO" id="GO:0046677">
    <property type="term" value="P:response to antibiotic"/>
    <property type="evidence" value="ECO:0007669"/>
    <property type="project" value="UniProtKB-UniRule"/>
</dbReference>
<dbReference type="HAMAP" id="MF_01006">
    <property type="entry name" value="Undec_diphosphatase"/>
    <property type="match status" value="1"/>
</dbReference>
<dbReference type="InterPro" id="IPR003824">
    <property type="entry name" value="UppP"/>
</dbReference>
<dbReference type="NCBIfam" id="NF001392">
    <property type="entry name" value="PRK00281.2-1"/>
    <property type="match status" value="1"/>
</dbReference>
<dbReference type="NCBIfam" id="TIGR00753">
    <property type="entry name" value="undec_PP_bacA"/>
    <property type="match status" value="1"/>
</dbReference>
<dbReference type="PANTHER" id="PTHR30622">
    <property type="entry name" value="UNDECAPRENYL-DIPHOSPHATASE"/>
    <property type="match status" value="1"/>
</dbReference>
<dbReference type="PANTHER" id="PTHR30622:SF4">
    <property type="entry name" value="UNDECAPRENYL-DIPHOSPHATASE"/>
    <property type="match status" value="1"/>
</dbReference>
<dbReference type="Pfam" id="PF02673">
    <property type="entry name" value="BacA"/>
    <property type="match status" value="1"/>
</dbReference>
<name>UPPP_STRGG</name>
<protein>
    <recommendedName>
        <fullName evidence="1">Undecaprenyl-diphosphatase</fullName>
        <ecNumber evidence="1">3.6.1.27</ecNumber>
    </recommendedName>
    <alternativeName>
        <fullName evidence="1">Bacitracin resistance protein</fullName>
    </alternativeName>
    <alternativeName>
        <fullName evidence="1">Undecaprenyl pyrophosphate phosphatase</fullName>
    </alternativeName>
</protein>
<organism>
    <name type="scientific">Streptomyces griseus subsp. griseus (strain JCM 4626 / CBS 651.72 / NBRC 13350 / KCC S-0626 / ISP 5235)</name>
    <dbReference type="NCBI Taxonomy" id="455632"/>
    <lineage>
        <taxon>Bacteria</taxon>
        <taxon>Bacillati</taxon>
        <taxon>Actinomycetota</taxon>
        <taxon>Actinomycetes</taxon>
        <taxon>Kitasatosporales</taxon>
        <taxon>Streptomycetaceae</taxon>
        <taxon>Streptomyces</taxon>
    </lineage>
</organism>
<gene>
    <name evidence="1" type="primary">uppP</name>
    <name type="ordered locus">SGR_6235</name>
</gene>